<gene>
    <name evidence="1" type="primary">pyrH</name>
    <name type="ordered locus">lhv_2935</name>
</gene>
<accession>A8YVR7</accession>
<organism>
    <name type="scientific">Lactobacillus helveticus (strain DPC 4571)</name>
    <dbReference type="NCBI Taxonomy" id="405566"/>
    <lineage>
        <taxon>Bacteria</taxon>
        <taxon>Bacillati</taxon>
        <taxon>Bacillota</taxon>
        <taxon>Bacilli</taxon>
        <taxon>Lactobacillales</taxon>
        <taxon>Lactobacillaceae</taxon>
        <taxon>Lactobacillus</taxon>
    </lineage>
</organism>
<proteinExistence type="inferred from homology"/>
<comment type="function">
    <text evidence="1">Catalyzes the reversible phosphorylation of UMP to UDP.</text>
</comment>
<comment type="catalytic activity">
    <reaction evidence="1">
        <text>UMP + ATP = UDP + ADP</text>
        <dbReference type="Rhea" id="RHEA:24400"/>
        <dbReference type="ChEBI" id="CHEBI:30616"/>
        <dbReference type="ChEBI" id="CHEBI:57865"/>
        <dbReference type="ChEBI" id="CHEBI:58223"/>
        <dbReference type="ChEBI" id="CHEBI:456216"/>
        <dbReference type="EC" id="2.7.4.22"/>
    </reaction>
</comment>
<comment type="activity regulation">
    <text evidence="1">Allosterically activated by GTP. Inhibited by UTP.</text>
</comment>
<comment type="pathway">
    <text evidence="1">Pyrimidine metabolism; CTP biosynthesis via de novo pathway; UDP from UMP (UMPK route): step 1/1.</text>
</comment>
<comment type="subunit">
    <text evidence="1">Homohexamer.</text>
</comment>
<comment type="subcellular location">
    <subcellularLocation>
        <location evidence="1">Cytoplasm</location>
    </subcellularLocation>
</comment>
<comment type="similarity">
    <text evidence="1">Belongs to the UMP kinase family.</text>
</comment>
<sequence length="241" mass="25857">MSQVKYKRIILKISGEALAGDKGNGINPTVIGHLAKEIKSVYDLCVGIGIVCGGGNMWRGETGAKLGMERAQADYMGMLATIMNGLALQDGLEKVGVPTRMQTSIEMRQIAEPYIRRRALRHLEKGRVVIFGGGTGNPYFSTDTTAALRAAEIGADVILMAKNGVDGVYSADPKTDPTATKFTELTQLDLISKNLKVMDRTASSLSMDTEIPLIVFNVNTPGNIKKVVVGENIGTVIRGDK</sequence>
<evidence type="ECO:0000255" key="1">
    <source>
        <dbReference type="HAMAP-Rule" id="MF_01220"/>
    </source>
</evidence>
<reference key="1">
    <citation type="journal article" date="2008" name="J. Bacteriol.">
        <title>Genome sequence of Lactobacillus helveticus: an organism distinguished by selective gene loss and IS element expansion.</title>
        <authorList>
            <person name="Callanan M."/>
            <person name="Kaleta P."/>
            <person name="O'Callaghan J."/>
            <person name="O'Sullivan O."/>
            <person name="Jordan K."/>
            <person name="McAuliffe O."/>
            <person name="Sangrador-Vegas A."/>
            <person name="Slattery L."/>
            <person name="Fitzgerald G.F."/>
            <person name="Beresford T."/>
            <person name="Ross R.P."/>
        </authorList>
    </citation>
    <scope>NUCLEOTIDE SEQUENCE [LARGE SCALE GENOMIC DNA]</scope>
    <source>
        <strain>DPC 4571</strain>
    </source>
</reference>
<dbReference type="EC" id="2.7.4.22" evidence="1"/>
<dbReference type="EMBL" id="CP000517">
    <property type="protein sequence ID" value="ABX27898.1"/>
    <property type="molecule type" value="Genomic_DNA"/>
</dbReference>
<dbReference type="RefSeq" id="WP_003629020.1">
    <property type="nucleotide sequence ID" value="NC_010080.1"/>
</dbReference>
<dbReference type="SMR" id="A8YVR7"/>
<dbReference type="KEGG" id="lhe:lhv_2935"/>
<dbReference type="eggNOG" id="COG0528">
    <property type="taxonomic scope" value="Bacteria"/>
</dbReference>
<dbReference type="HOGENOM" id="CLU_033861_0_0_9"/>
<dbReference type="UniPathway" id="UPA00159">
    <property type="reaction ID" value="UER00275"/>
</dbReference>
<dbReference type="Proteomes" id="UP000000790">
    <property type="component" value="Chromosome"/>
</dbReference>
<dbReference type="GO" id="GO:0005737">
    <property type="term" value="C:cytoplasm"/>
    <property type="evidence" value="ECO:0007669"/>
    <property type="project" value="UniProtKB-SubCell"/>
</dbReference>
<dbReference type="GO" id="GO:0005524">
    <property type="term" value="F:ATP binding"/>
    <property type="evidence" value="ECO:0007669"/>
    <property type="project" value="UniProtKB-KW"/>
</dbReference>
<dbReference type="GO" id="GO:0033862">
    <property type="term" value="F:UMP kinase activity"/>
    <property type="evidence" value="ECO:0007669"/>
    <property type="project" value="UniProtKB-EC"/>
</dbReference>
<dbReference type="GO" id="GO:0044210">
    <property type="term" value="P:'de novo' CTP biosynthetic process"/>
    <property type="evidence" value="ECO:0007669"/>
    <property type="project" value="UniProtKB-UniRule"/>
</dbReference>
<dbReference type="GO" id="GO:0006225">
    <property type="term" value="P:UDP biosynthetic process"/>
    <property type="evidence" value="ECO:0007669"/>
    <property type="project" value="TreeGrafter"/>
</dbReference>
<dbReference type="CDD" id="cd04254">
    <property type="entry name" value="AAK_UMPK-PyrH-Ec"/>
    <property type="match status" value="1"/>
</dbReference>
<dbReference type="FunFam" id="3.40.1160.10:FF:000001">
    <property type="entry name" value="Uridylate kinase"/>
    <property type="match status" value="1"/>
</dbReference>
<dbReference type="Gene3D" id="3.40.1160.10">
    <property type="entry name" value="Acetylglutamate kinase-like"/>
    <property type="match status" value="1"/>
</dbReference>
<dbReference type="HAMAP" id="MF_01220_B">
    <property type="entry name" value="PyrH_B"/>
    <property type="match status" value="1"/>
</dbReference>
<dbReference type="InterPro" id="IPR036393">
    <property type="entry name" value="AceGlu_kinase-like_sf"/>
</dbReference>
<dbReference type="InterPro" id="IPR001048">
    <property type="entry name" value="Asp/Glu/Uridylate_kinase"/>
</dbReference>
<dbReference type="InterPro" id="IPR011817">
    <property type="entry name" value="Uridylate_kinase"/>
</dbReference>
<dbReference type="InterPro" id="IPR015963">
    <property type="entry name" value="Uridylate_kinase_bac"/>
</dbReference>
<dbReference type="NCBIfam" id="TIGR02075">
    <property type="entry name" value="pyrH_bact"/>
    <property type="match status" value="1"/>
</dbReference>
<dbReference type="PANTHER" id="PTHR42833">
    <property type="entry name" value="URIDYLATE KINASE"/>
    <property type="match status" value="1"/>
</dbReference>
<dbReference type="PANTHER" id="PTHR42833:SF4">
    <property type="entry name" value="URIDYLATE KINASE PUMPKIN, CHLOROPLASTIC"/>
    <property type="match status" value="1"/>
</dbReference>
<dbReference type="Pfam" id="PF00696">
    <property type="entry name" value="AA_kinase"/>
    <property type="match status" value="1"/>
</dbReference>
<dbReference type="PIRSF" id="PIRSF005650">
    <property type="entry name" value="Uridylate_kin"/>
    <property type="match status" value="1"/>
</dbReference>
<dbReference type="SUPFAM" id="SSF53633">
    <property type="entry name" value="Carbamate kinase-like"/>
    <property type="match status" value="1"/>
</dbReference>
<keyword id="KW-0021">Allosteric enzyme</keyword>
<keyword id="KW-0067">ATP-binding</keyword>
<keyword id="KW-0963">Cytoplasm</keyword>
<keyword id="KW-0418">Kinase</keyword>
<keyword id="KW-0547">Nucleotide-binding</keyword>
<keyword id="KW-0665">Pyrimidine biosynthesis</keyword>
<keyword id="KW-0808">Transferase</keyword>
<protein>
    <recommendedName>
        <fullName evidence="1">Uridylate kinase</fullName>
        <shortName evidence="1">UK</shortName>
        <ecNumber evidence="1">2.7.4.22</ecNumber>
    </recommendedName>
    <alternativeName>
        <fullName evidence="1">Uridine monophosphate kinase</fullName>
        <shortName evidence="1">UMP kinase</shortName>
        <shortName evidence="1">UMPK</shortName>
    </alternativeName>
</protein>
<name>PYRH_LACH4</name>
<feature type="chain" id="PRO_1000073143" description="Uridylate kinase">
    <location>
        <begin position="1"/>
        <end position="241"/>
    </location>
</feature>
<feature type="region of interest" description="Involved in allosteric activation by GTP" evidence="1">
    <location>
        <begin position="20"/>
        <end position="25"/>
    </location>
</feature>
<feature type="binding site" evidence="1">
    <location>
        <begin position="12"/>
        <end position="15"/>
    </location>
    <ligand>
        <name>ATP</name>
        <dbReference type="ChEBI" id="CHEBI:30616"/>
    </ligand>
</feature>
<feature type="binding site" evidence="1">
    <location>
        <position position="54"/>
    </location>
    <ligand>
        <name>UMP</name>
        <dbReference type="ChEBI" id="CHEBI:57865"/>
    </ligand>
</feature>
<feature type="binding site" evidence="1">
    <location>
        <position position="55"/>
    </location>
    <ligand>
        <name>ATP</name>
        <dbReference type="ChEBI" id="CHEBI:30616"/>
    </ligand>
</feature>
<feature type="binding site" evidence="1">
    <location>
        <position position="59"/>
    </location>
    <ligand>
        <name>ATP</name>
        <dbReference type="ChEBI" id="CHEBI:30616"/>
    </ligand>
</feature>
<feature type="binding site" evidence="1">
    <location>
        <position position="74"/>
    </location>
    <ligand>
        <name>UMP</name>
        <dbReference type="ChEBI" id="CHEBI:57865"/>
    </ligand>
</feature>
<feature type="binding site" evidence="1">
    <location>
        <begin position="135"/>
        <end position="142"/>
    </location>
    <ligand>
        <name>UMP</name>
        <dbReference type="ChEBI" id="CHEBI:57865"/>
    </ligand>
</feature>
<feature type="binding site" evidence="1">
    <location>
        <position position="163"/>
    </location>
    <ligand>
        <name>ATP</name>
        <dbReference type="ChEBI" id="CHEBI:30616"/>
    </ligand>
</feature>
<feature type="binding site" evidence="1">
    <location>
        <position position="169"/>
    </location>
    <ligand>
        <name>ATP</name>
        <dbReference type="ChEBI" id="CHEBI:30616"/>
    </ligand>
</feature>
<feature type="binding site" evidence="1">
    <location>
        <position position="172"/>
    </location>
    <ligand>
        <name>ATP</name>
        <dbReference type="ChEBI" id="CHEBI:30616"/>
    </ligand>
</feature>